<evidence type="ECO:0000250" key="1"/>
<evidence type="ECO:0000256" key="2">
    <source>
        <dbReference type="SAM" id="MobiDB-lite"/>
    </source>
</evidence>
<evidence type="ECO:0000305" key="3"/>
<sequence>MIANFDKTQPIGQSDALPGRTTPMPVARLHVVNQHSMTHVPDHMEVAIFAMGCFWGVERLFWQQPGVYSTASGYCGGYTPNPTYREVCTGKTGHAEAVRVVFDPAVVSYPQLLQLFWENHNPAQGMRQGNDIGTQYRSAIYTLTTEQETAAKESYQRFQQAMRDAGNDHDITTEIQPAGPFYYAEDEHQQYLHKNPDGYCGLGGIGVCLPPQG</sequence>
<dbReference type="EC" id="1.8.4.11"/>
<dbReference type="EMBL" id="AJ012716">
    <property type="protein sequence ID" value="CAA10143.1"/>
    <property type="molecule type" value="Genomic_DNA"/>
</dbReference>
<dbReference type="EMBL" id="CP002038">
    <property type="protein sequence ID" value="ADM99860.1"/>
    <property type="molecule type" value="Genomic_DNA"/>
</dbReference>
<dbReference type="BMRB" id="Q9ZEQ8"/>
<dbReference type="SMR" id="Q9ZEQ8"/>
<dbReference type="STRING" id="198628.Dda3937_00164"/>
<dbReference type="KEGG" id="ddd:Dda3937_00164"/>
<dbReference type="PATRIC" id="fig|198628.6.peg.3608"/>
<dbReference type="eggNOG" id="COG0225">
    <property type="taxonomic scope" value="Bacteria"/>
</dbReference>
<dbReference type="HOGENOM" id="CLU_031040_10_3_6"/>
<dbReference type="OrthoDB" id="4174719at2"/>
<dbReference type="Proteomes" id="UP000006859">
    <property type="component" value="Chromosome"/>
</dbReference>
<dbReference type="GO" id="GO:0005737">
    <property type="term" value="C:cytoplasm"/>
    <property type="evidence" value="ECO:0007669"/>
    <property type="project" value="TreeGrafter"/>
</dbReference>
<dbReference type="GO" id="GO:0036456">
    <property type="term" value="F:L-methionine-(S)-S-oxide reductase activity"/>
    <property type="evidence" value="ECO:0007669"/>
    <property type="project" value="TreeGrafter"/>
</dbReference>
<dbReference type="GO" id="GO:0008113">
    <property type="term" value="F:peptide-methionine (S)-S-oxide reductase activity"/>
    <property type="evidence" value="ECO:0007669"/>
    <property type="project" value="UniProtKB-UniRule"/>
</dbReference>
<dbReference type="GO" id="GO:0034599">
    <property type="term" value="P:cellular response to oxidative stress"/>
    <property type="evidence" value="ECO:0007669"/>
    <property type="project" value="TreeGrafter"/>
</dbReference>
<dbReference type="GO" id="GO:0036211">
    <property type="term" value="P:protein modification process"/>
    <property type="evidence" value="ECO:0007669"/>
    <property type="project" value="UniProtKB-UniRule"/>
</dbReference>
<dbReference type="FunFam" id="3.30.1060.10:FF:000001">
    <property type="entry name" value="Peptide methionine sulfoxide reductase MsrA"/>
    <property type="match status" value="1"/>
</dbReference>
<dbReference type="Gene3D" id="3.30.1060.10">
    <property type="entry name" value="Peptide methionine sulphoxide reductase MsrA"/>
    <property type="match status" value="1"/>
</dbReference>
<dbReference type="HAMAP" id="MF_01401">
    <property type="entry name" value="MsrA"/>
    <property type="match status" value="1"/>
</dbReference>
<dbReference type="InterPro" id="IPR002569">
    <property type="entry name" value="Met_Sox_Rdtase_MsrA_dom"/>
</dbReference>
<dbReference type="InterPro" id="IPR036509">
    <property type="entry name" value="Met_Sox_Rdtase_MsrA_sf"/>
</dbReference>
<dbReference type="InterPro" id="IPR050162">
    <property type="entry name" value="MsrA_MetSO_reductase"/>
</dbReference>
<dbReference type="NCBIfam" id="TIGR00401">
    <property type="entry name" value="msrA"/>
    <property type="match status" value="1"/>
</dbReference>
<dbReference type="PANTHER" id="PTHR42799">
    <property type="entry name" value="MITOCHONDRIAL PEPTIDE METHIONINE SULFOXIDE REDUCTASE"/>
    <property type="match status" value="1"/>
</dbReference>
<dbReference type="PANTHER" id="PTHR42799:SF2">
    <property type="entry name" value="MITOCHONDRIAL PEPTIDE METHIONINE SULFOXIDE REDUCTASE"/>
    <property type="match status" value="1"/>
</dbReference>
<dbReference type="Pfam" id="PF01625">
    <property type="entry name" value="PMSR"/>
    <property type="match status" value="1"/>
</dbReference>
<dbReference type="SUPFAM" id="SSF55068">
    <property type="entry name" value="Peptide methionine sulfoxide reductase"/>
    <property type="match status" value="1"/>
</dbReference>
<feature type="chain" id="PRO_0000138549" description="Peptide methionine sulfoxide reductase MsrA">
    <location>
        <begin position="1"/>
        <end position="213"/>
    </location>
</feature>
<feature type="region of interest" description="Disordered" evidence="2">
    <location>
        <begin position="1"/>
        <end position="20"/>
    </location>
</feature>
<feature type="compositionally biased region" description="Polar residues" evidence="2">
    <location>
        <begin position="1"/>
        <end position="12"/>
    </location>
</feature>
<feature type="active site" evidence="1">
    <location>
        <position position="53"/>
    </location>
</feature>
<proteinExistence type="inferred from homology"/>
<keyword id="KW-0560">Oxidoreductase</keyword>
<keyword id="KW-1185">Reference proteome</keyword>
<comment type="function">
    <text evidence="1">Has an important function as a repair enzyme for proteins that have been inactivated by oxidation. Catalyzes the reversible oxidation-reduction of methionine sulfoxide in proteins to methionine (By similarity).</text>
</comment>
<comment type="catalytic activity">
    <reaction>
        <text>L-methionyl-[protein] + [thioredoxin]-disulfide + H2O = L-methionyl-(S)-S-oxide-[protein] + [thioredoxin]-dithiol</text>
        <dbReference type="Rhea" id="RHEA:14217"/>
        <dbReference type="Rhea" id="RHEA-COMP:10698"/>
        <dbReference type="Rhea" id="RHEA-COMP:10700"/>
        <dbReference type="Rhea" id="RHEA-COMP:12313"/>
        <dbReference type="Rhea" id="RHEA-COMP:12315"/>
        <dbReference type="ChEBI" id="CHEBI:15377"/>
        <dbReference type="ChEBI" id="CHEBI:16044"/>
        <dbReference type="ChEBI" id="CHEBI:29950"/>
        <dbReference type="ChEBI" id="CHEBI:44120"/>
        <dbReference type="ChEBI" id="CHEBI:50058"/>
        <dbReference type="EC" id="1.8.4.11"/>
    </reaction>
</comment>
<comment type="catalytic activity">
    <reaction>
        <text>[thioredoxin]-disulfide + L-methionine + H2O = L-methionine (S)-S-oxide + [thioredoxin]-dithiol</text>
        <dbReference type="Rhea" id="RHEA:19993"/>
        <dbReference type="Rhea" id="RHEA-COMP:10698"/>
        <dbReference type="Rhea" id="RHEA-COMP:10700"/>
        <dbReference type="ChEBI" id="CHEBI:15377"/>
        <dbReference type="ChEBI" id="CHEBI:29950"/>
        <dbReference type="ChEBI" id="CHEBI:50058"/>
        <dbReference type="ChEBI" id="CHEBI:57844"/>
        <dbReference type="ChEBI" id="CHEBI:58772"/>
        <dbReference type="EC" id="1.8.4.11"/>
    </reaction>
</comment>
<comment type="similarity">
    <text evidence="3">Belongs to the MsrA Met sulfoxide reductase family.</text>
</comment>
<name>MSRA_DICD3</name>
<reference key="1">
    <citation type="journal article" date="1999" name="Proc. Natl. Acad. Sci. U.S.A.">
        <title>The minimal gene set member msrA, encoding peptide methionine sulfoxide reductase, is a virulence determinant of the plant pathogen Erwinia chrysanthemi.</title>
        <authorList>
            <person name="Hassouni M.E."/>
            <person name="Chambost J.P."/>
            <person name="Expert D."/>
            <person name="Van Gijsegem F."/>
            <person name="Barras F."/>
        </authorList>
    </citation>
    <scope>NUCLEOTIDE SEQUENCE [GENOMIC DNA]</scope>
    <source>
        <strain>3937</strain>
    </source>
</reference>
<reference key="2">
    <citation type="journal article" date="2011" name="J. Bacteriol.">
        <title>Genome sequence of the plant-pathogenic bacterium Dickeya dadantii 3937.</title>
        <authorList>
            <person name="Glasner J.D."/>
            <person name="Yang C.H."/>
            <person name="Reverchon S."/>
            <person name="Hugouvieux-Cotte-Pattat N."/>
            <person name="Condemine G."/>
            <person name="Bohin J.P."/>
            <person name="Van Gijsegem F."/>
            <person name="Yang S."/>
            <person name="Franza T."/>
            <person name="Expert D."/>
            <person name="Plunkett G. III"/>
            <person name="San Francisco M.J."/>
            <person name="Charkowski A.O."/>
            <person name="Py B."/>
            <person name="Bell K."/>
            <person name="Rauscher L."/>
            <person name="Rodriguez-Palenzuela P."/>
            <person name="Toussaint A."/>
            <person name="Holeva M.C."/>
            <person name="He S.Y."/>
            <person name="Douet V."/>
            <person name="Boccara M."/>
            <person name="Blanco C."/>
            <person name="Toth I."/>
            <person name="Anderson B.D."/>
            <person name="Biehl B.S."/>
            <person name="Mau B."/>
            <person name="Flynn S.M."/>
            <person name="Barras F."/>
            <person name="Lindeberg M."/>
            <person name="Birch P.R."/>
            <person name="Tsuyumu S."/>
            <person name="Shi X."/>
            <person name="Hibbing M."/>
            <person name="Yap M.N."/>
            <person name="Carpentier M."/>
            <person name="Dassa E."/>
            <person name="Umehara M."/>
            <person name="Kim J.F."/>
            <person name="Rusch M."/>
            <person name="Soni P."/>
            <person name="Mayhew G.F."/>
            <person name="Fouts D.E."/>
            <person name="Gill S.R."/>
            <person name="Blattner F.R."/>
            <person name="Keen N.T."/>
            <person name="Perna N.T."/>
        </authorList>
    </citation>
    <scope>NUCLEOTIDE SEQUENCE [LARGE SCALE GENOMIC DNA]</scope>
    <source>
        <strain>3937</strain>
    </source>
</reference>
<protein>
    <recommendedName>
        <fullName>Peptide methionine sulfoxide reductase MsrA</fullName>
        <shortName>Protein-methionine-S-oxide reductase</shortName>
        <ecNumber>1.8.4.11</ecNumber>
    </recommendedName>
    <alternativeName>
        <fullName>Peptide-methionine (S)-S-oxide reductase</fullName>
        <shortName>Peptide Met(O) reductase</shortName>
    </alternativeName>
</protein>
<accession>Q9ZEQ8</accession>
<accession>E0SEC6</accession>
<gene>
    <name type="primary">msrA</name>
    <name type="ordered locus">Dda3937_00164</name>
</gene>
<organism>
    <name type="scientific">Dickeya dadantii (strain 3937)</name>
    <name type="common">Erwinia chrysanthemi (strain 3937)</name>
    <dbReference type="NCBI Taxonomy" id="198628"/>
    <lineage>
        <taxon>Bacteria</taxon>
        <taxon>Pseudomonadati</taxon>
        <taxon>Pseudomonadota</taxon>
        <taxon>Gammaproteobacteria</taxon>
        <taxon>Enterobacterales</taxon>
        <taxon>Pectobacteriaceae</taxon>
        <taxon>Dickeya</taxon>
    </lineage>
</organism>